<gene>
    <name type="primary">AIM11</name>
    <name type="ORF">PGUG_03530</name>
</gene>
<keyword id="KW-0472">Membrane</keyword>
<keyword id="KW-1185">Reference proteome</keyword>
<keyword id="KW-0812">Transmembrane</keyword>
<keyword id="KW-1133">Transmembrane helix</keyword>
<dbReference type="EMBL" id="CH408158">
    <property type="protein sequence ID" value="EDK39432.2"/>
    <property type="molecule type" value="Genomic_DNA"/>
</dbReference>
<dbReference type="RefSeq" id="XP_001484149.1">
    <property type="nucleotide sequence ID" value="XM_001484099.1"/>
</dbReference>
<dbReference type="SMR" id="A5DJS9"/>
<dbReference type="FunCoup" id="A5DJS9">
    <property type="interactions" value="27"/>
</dbReference>
<dbReference type="GeneID" id="5125971"/>
<dbReference type="KEGG" id="pgu:PGUG_03530"/>
<dbReference type="eggNOG" id="ENOG502SAK0">
    <property type="taxonomic scope" value="Eukaryota"/>
</dbReference>
<dbReference type="HOGENOM" id="CLU_118700_0_0_1"/>
<dbReference type="InParanoid" id="A5DJS9"/>
<dbReference type="OMA" id="RFAYKST"/>
<dbReference type="OrthoDB" id="4088121at2759"/>
<dbReference type="Proteomes" id="UP000001997">
    <property type="component" value="Unassembled WGS sequence"/>
</dbReference>
<dbReference type="GO" id="GO:0016020">
    <property type="term" value="C:membrane"/>
    <property type="evidence" value="ECO:0007669"/>
    <property type="project" value="UniProtKB-SubCell"/>
</dbReference>
<dbReference type="GO" id="GO:0005739">
    <property type="term" value="C:mitochondrion"/>
    <property type="evidence" value="ECO:0007669"/>
    <property type="project" value="TreeGrafter"/>
</dbReference>
<dbReference type="InterPro" id="IPR038814">
    <property type="entry name" value="AIM11"/>
</dbReference>
<dbReference type="PANTHER" id="PTHR39136">
    <property type="entry name" value="ALTERED INHERITANCE OF MITOCHONDRIA PROTEIN 11"/>
    <property type="match status" value="1"/>
</dbReference>
<dbReference type="PANTHER" id="PTHR39136:SF1">
    <property type="entry name" value="ALTERED INHERITANCE OF MITOCHONDRIA PROTEIN 11"/>
    <property type="match status" value="1"/>
</dbReference>
<comment type="subcellular location">
    <subcellularLocation>
        <location evidence="2">Membrane</location>
        <topology evidence="2">Multi-pass membrane protein</topology>
    </subcellularLocation>
</comment>
<comment type="similarity">
    <text evidence="2">Belongs to the AIM11 family.</text>
</comment>
<feature type="chain" id="PRO_0000405651" description="Altered inheritance of mitochondria protein 11">
    <location>
        <begin position="1"/>
        <end position="155"/>
    </location>
</feature>
<feature type="transmembrane region" description="Helical" evidence="1">
    <location>
        <begin position="30"/>
        <end position="47"/>
    </location>
</feature>
<feature type="transmembrane region" description="Helical" evidence="1">
    <location>
        <begin position="76"/>
        <end position="98"/>
    </location>
</feature>
<accession>A5DJS9</accession>
<sequence>MSFTNLLEKYDFKLASASEEYKQRRKYQMALFMASGAATIFAARFAFKSTMARQYVPTLFQGNHQPPTSYNFTTDAAVAVGTGTVLCGSVSSMIIFGTCWMMDVSTFKEFGWRMKTVMGGYEKQKQLAQMPLDEESEIIQNGLNDILEGKYDDIE</sequence>
<organism>
    <name type="scientific">Meyerozyma guilliermondii (strain ATCC 6260 / CBS 566 / DSM 6381 / JCM 1539 / NBRC 10279 / NRRL Y-324)</name>
    <name type="common">Yeast</name>
    <name type="synonym">Candida guilliermondii</name>
    <dbReference type="NCBI Taxonomy" id="294746"/>
    <lineage>
        <taxon>Eukaryota</taxon>
        <taxon>Fungi</taxon>
        <taxon>Dikarya</taxon>
        <taxon>Ascomycota</taxon>
        <taxon>Saccharomycotina</taxon>
        <taxon>Pichiomycetes</taxon>
        <taxon>Debaryomycetaceae</taxon>
        <taxon>Meyerozyma</taxon>
    </lineage>
</organism>
<protein>
    <recommendedName>
        <fullName>Altered inheritance of mitochondria protein 11</fullName>
    </recommendedName>
</protein>
<proteinExistence type="inferred from homology"/>
<name>AIM11_PICGU</name>
<reference key="1">
    <citation type="journal article" date="2009" name="Nature">
        <title>Evolution of pathogenicity and sexual reproduction in eight Candida genomes.</title>
        <authorList>
            <person name="Butler G."/>
            <person name="Rasmussen M.D."/>
            <person name="Lin M.F."/>
            <person name="Santos M.A.S."/>
            <person name="Sakthikumar S."/>
            <person name="Munro C.A."/>
            <person name="Rheinbay E."/>
            <person name="Grabherr M."/>
            <person name="Forche A."/>
            <person name="Reedy J.L."/>
            <person name="Agrafioti I."/>
            <person name="Arnaud M.B."/>
            <person name="Bates S."/>
            <person name="Brown A.J.P."/>
            <person name="Brunke S."/>
            <person name="Costanzo M.C."/>
            <person name="Fitzpatrick D.A."/>
            <person name="de Groot P.W.J."/>
            <person name="Harris D."/>
            <person name="Hoyer L.L."/>
            <person name="Hube B."/>
            <person name="Klis F.M."/>
            <person name="Kodira C."/>
            <person name="Lennard N."/>
            <person name="Logue M.E."/>
            <person name="Martin R."/>
            <person name="Neiman A.M."/>
            <person name="Nikolaou E."/>
            <person name="Quail M.A."/>
            <person name="Quinn J."/>
            <person name="Santos M.C."/>
            <person name="Schmitzberger F.F."/>
            <person name="Sherlock G."/>
            <person name="Shah P."/>
            <person name="Silverstein K.A.T."/>
            <person name="Skrzypek M.S."/>
            <person name="Soll D."/>
            <person name="Staggs R."/>
            <person name="Stansfield I."/>
            <person name="Stumpf M.P.H."/>
            <person name="Sudbery P.E."/>
            <person name="Srikantha T."/>
            <person name="Zeng Q."/>
            <person name="Berman J."/>
            <person name="Berriman M."/>
            <person name="Heitman J."/>
            <person name="Gow N.A.R."/>
            <person name="Lorenz M.C."/>
            <person name="Birren B.W."/>
            <person name="Kellis M."/>
            <person name="Cuomo C.A."/>
        </authorList>
    </citation>
    <scope>NUCLEOTIDE SEQUENCE [LARGE SCALE GENOMIC DNA]</scope>
    <source>
        <strain>ATCC 6260 / CBS 566 / DSM 6381 / JCM 1539 / NBRC 10279 / NRRL Y-324</strain>
    </source>
</reference>
<evidence type="ECO:0000255" key="1"/>
<evidence type="ECO:0000305" key="2"/>